<comment type="function">
    <text evidence="1 2 3">Responsible for heterokaryon incompatibility, a process that ensures that during spontaneous, vegetative cell fusion only compatible cells from the same colony survive (non-self-recognition). Forms a prion for the non-Mendelian trait [het-s]. Interacts with het-S from incompatible cells to trigger a lethal reaction that prevents the formation of viable heterokaryons. It is unknown if the native, soluble protein has a cellular function.</text>
</comment>
<comment type="subunit">
    <text>Homodimer. Forms heterodimers with het-S.</text>
</comment>
<comment type="interaction">
    <interactant intactId="EBI-15800884">
        <id>Q03689</id>
    </interactant>
    <interactant intactId="EBI-15800884">
        <id>Q03689</id>
        <label>het-s</label>
    </interactant>
    <organismsDiffer>false</organismsDiffer>
    <experiments>3</experiments>
</comment>
<comment type="subcellular location">
    <subcellularLocation>
        <location>Cytoplasm</location>
    </subcellularLocation>
</comment>
<comment type="domain">
    <text>The globular domain is dispensable for prion formation and incompatibility function. However, the het-S globular domain, but not the het-s globular domain, is essential for programmed cell death.</text>
</comment>
<comment type="domain">
    <text>The prion domain (PrD) is unstructured in its native, soluble form, and forms a form a beta solenoid with a hydrophobic core in its amyloid form. It is both necessary and sufficient for amyloid formation and prion propagation.</text>
</comment>
<comment type="miscellaneous">
    <text evidence="4 6">[Het-s] is the prion form of het-s (PubMed:9275200). [Het-s] is the result of a conformational change of the cellular het-s protein that becomes self-propagating and infectious. This conformational change generates a form of het-S that assembles into amyloid fibrils (PubMed:12032295). [Het-s] is transmitted as a non-Mendelian cytoplasmic element. On vegetative cell fusion with neutral [Het-s*] strains, the prion spreads throughout the cellular network and converts the non-prion form of het-s to a prion state, making the strains acquire the [het-s] phenotype (PubMed:9275200). Interacts with het-S to trigger incompatibility (PubMed:12032295). The protein present in [Het-s] strains is more resistant to proteinase K than that present in [Het-s*] mycelium (PubMed:9275200).</text>
</comment>
<comment type="miscellaneous">
    <text evidence="5">In P.anserina, the het-s locus exists as 2 incompatible alleles, het-s and het-S. Strains of het-s genotype (e.g. A, C, s, and V) can display 2 distinct phenoypes, the neutral (prion-free) [Het-s*], which is compatible with het-S strains (e.g. D, S, U, and X), and the reactive [Het-s] phenotype, which causes rapid cell death in het-S strains. Although the two alleles het-s and het-S differ from each other by 14 amino acids, vegetative incompatibility between s and S strains can be attributed to a single amino acid difference in the proteins encoded by the het-s locus (PubMed:8224826). A sequence for the het-S allele can be found in strain S (AC B2ACC7).</text>
</comment>
<keyword id="KW-0002">3D-structure</keyword>
<keyword id="KW-0034">Amyloid</keyword>
<keyword id="KW-0963">Cytoplasm</keyword>
<keyword id="KW-0640">Prion</keyword>
<evidence type="ECO:0000269" key="1">
    <source>
    </source>
</evidence>
<evidence type="ECO:0000269" key="2">
    <source>
    </source>
</evidence>
<evidence type="ECO:0000269" key="3">
    <source>
    </source>
</evidence>
<evidence type="ECO:0000305" key="4">
    <source>
    </source>
</evidence>
<evidence type="ECO:0000305" key="5">
    <source>
    </source>
</evidence>
<evidence type="ECO:0000305" key="6">
    <source>
    </source>
</evidence>
<evidence type="ECO:0007829" key="7">
    <source>
        <dbReference type="PDB" id="2KJ3"/>
    </source>
</evidence>
<evidence type="ECO:0007829" key="8">
    <source>
        <dbReference type="PDB" id="2WVN"/>
    </source>
</evidence>
<evidence type="ECO:0007829" key="9">
    <source>
        <dbReference type="PDB" id="2WVQ"/>
    </source>
</evidence>
<gene>
    <name type="primary">het-s</name>
    <name type="synonym">small s</name>
</gene>
<name>HETS_PODAS</name>
<protein>
    <recommendedName>
        <fullName>Heterokaryon incompatibility protein s</fullName>
    </recommendedName>
    <alternativeName>
        <fullName>Small s protein</fullName>
    </alternativeName>
    <alternativeName>
        <fullName>Vegetative incompatibility protein s</fullName>
    </alternativeName>
</protein>
<feature type="chain" id="PRO_0000417569" description="Heterokaryon incompatibility protein s">
    <location>
        <begin position="1"/>
        <end position="289"/>
    </location>
</feature>
<feature type="region of interest" description="Globular domain">
    <location>
        <begin position="1"/>
        <end position="227"/>
    </location>
</feature>
<feature type="region of interest" description="Prion domain (PrD)">
    <location>
        <begin position="218"/>
        <end position="289"/>
    </location>
</feature>
<feature type="mutagenesis site" description="Converts its specificity to [Het-S]; when associated with H-33." evidence="2">
    <original>D</original>
    <variation>A</variation>
    <location>
        <position position="23"/>
    </location>
</feature>
<feature type="mutagenesis site" description="Converts its specificity to [Het-S]; when associated with A-23." evidence="2">
    <original>P</original>
    <variation>H</variation>
    <location>
        <position position="33"/>
    </location>
</feature>
<feature type="helix" evidence="9">
    <location>
        <begin position="14"/>
        <end position="24"/>
    </location>
</feature>
<feature type="helix" evidence="9">
    <location>
        <begin position="25"/>
        <end position="27"/>
    </location>
</feature>
<feature type="strand" evidence="9">
    <location>
        <begin position="28"/>
        <end position="31"/>
    </location>
</feature>
<feature type="helix" evidence="9">
    <location>
        <begin position="32"/>
        <end position="37"/>
    </location>
</feature>
<feature type="helix" evidence="9">
    <location>
        <begin position="38"/>
        <end position="58"/>
    </location>
</feature>
<feature type="turn" evidence="9">
    <location>
        <begin position="59"/>
        <end position="63"/>
    </location>
</feature>
<feature type="helix" evidence="9">
    <location>
        <begin position="65"/>
        <end position="68"/>
    </location>
</feature>
<feature type="strand" evidence="8">
    <location>
        <begin position="69"/>
        <end position="71"/>
    </location>
</feature>
<feature type="helix" evidence="9">
    <location>
        <begin position="75"/>
        <end position="104"/>
    </location>
</feature>
<feature type="helix" evidence="9">
    <location>
        <begin position="107"/>
        <end position="110"/>
    </location>
</feature>
<feature type="helix" evidence="9">
    <location>
        <begin position="115"/>
        <end position="117"/>
    </location>
</feature>
<feature type="helix" evidence="9">
    <location>
        <begin position="120"/>
        <end position="136"/>
    </location>
</feature>
<feature type="strand" evidence="9">
    <location>
        <begin position="148"/>
        <end position="150"/>
    </location>
</feature>
<feature type="helix" evidence="9">
    <location>
        <begin position="153"/>
        <end position="172"/>
    </location>
</feature>
<feature type="turn" evidence="9">
    <location>
        <begin position="173"/>
        <end position="175"/>
    </location>
</feature>
<feature type="helix" evidence="9">
    <location>
        <begin position="177"/>
        <end position="187"/>
    </location>
</feature>
<feature type="helix" evidence="9">
    <location>
        <begin position="194"/>
        <end position="203"/>
    </location>
</feature>
<feature type="turn" evidence="9">
    <location>
        <begin position="204"/>
        <end position="207"/>
    </location>
</feature>
<feature type="helix" evidence="9">
    <location>
        <begin position="209"/>
        <end position="220"/>
    </location>
</feature>
<feature type="strand" evidence="7">
    <location>
        <begin position="226"/>
        <end position="236"/>
    </location>
</feature>
<feature type="strand" evidence="7">
    <location>
        <begin position="238"/>
        <end position="245"/>
    </location>
</feature>
<feature type="turn" evidence="7">
    <location>
        <begin position="247"/>
        <end position="249"/>
    </location>
</feature>
<feature type="strand" evidence="7">
    <location>
        <begin position="261"/>
        <end position="272"/>
    </location>
</feature>
<feature type="strand" evidence="7">
    <location>
        <begin position="274"/>
        <end position="283"/>
    </location>
</feature>
<organism>
    <name type="scientific">Podospora anserina</name>
    <name type="common">Pleurage anserina</name>
    <dbReference type="NCBI Taxonomy" id="2587412"/>
    <lineage>
        <taxon>Eukaryota</taxon>
        <taxon>Fungi</taxon>
        <taxon>Dikarya</taxon>
        <taxon>Ascomycota</taxon>
        <taxon>Pezizomycotina</taxon>
        <taxon>Sordariomycetes</taxon>
        <taxon>Sordariomycetidae</taxon>
        <taxon>Sordariales</taxon>
        <taxon>Podosporaceae</taxon>
        <taxon>Podospora</taxon>
    </lineage>
</organism>
<reference key="1">
    <citation type="journal article" date="1991" name="Mol. Gen. Genet.">
        <title>Two allelic genes responsible for vegetative incompatibility in the fungus Podospora anserina are not essential for cell viability.</title>
        <authorList>
            <person name="Turcq B."/>
            <person name="Deleu C."/>
            <person name="Denayrolles M."/>
            <person name="Begueret J."/>
        </authorList>
    </citation>
    <scope>NUCLEOTIDE SEQUENCE [GENOMIC DNA]</scope>
    <scope>FUNCTION</scope>
    <source>
        <strain>s / FGSC 6710</strain>
    </source>
</reference>
<reference key="2">
    <citation type="journal article" date="1993" name="Genetics">
        <title>A single amino acid difference is sufficient to elicit vegetative incompatibility in the fungus Podospora anserina.</title>
        <authorList>
            <person name="Deleu C."/>
            <person name="Clave C."/>
            <person name="Begueret J."/>
        </authorList>
    </citation>
    <scope>NUCLEOTIDE SEQUENCE [GENOMIC DNA]</scope>
    <scope>FUNCTION</scope>
    <scope>MUTAGENESIS OF ASP-23 AND PRO-33</scope>
    <source>
        <strain>A</strain>
        <strain>C</strain>
        <strain>s / FGSC 6710</strain>
        <strain>V</strain>
    </source>
</reference>
<reference key="3">
    <citation type="journal article" date="1997" name="Proc. Natl. Acad. Sci. U.S.A.">
        <title>The protein product of the het-s heterokaryon incompatibility gene of the fungus Podospora anserina behaves as a prion analog.</title>
        <authorList>
            <person name="Coustou V."/>
            <person name="Deleu C."/>
            <person name="Saupe S."/>
            <person name="Begueret J."/>
        </authorList>
    </citation>
    <scope>PRION IDENTIFICATION</scope>
    <scope>FUNCTION</scope>
    <scope>INTERACTION WITH HET-S</scope>
</reference>
<reference key="4">
    <citation type="journal article" date="2002" name="Proc. Natl. Acad. Sci. U.S.A.">
        <title>Amyloid aggregates of the HET-s prion protein are infectious.</title>
        <authorList>
            <person name="Maddelein M.L."/>
            <person name="Dos Reis S."/>
            <person name="Duvezin-Caubet S."/>
            <person name="Coulary-Salin B."/>
            <person name="Saupe S.J."/>
        </authorList>
    </citation>
    <scope>PRION FORMATION</scope>
</reference>
<reference key="5">
    <citation type="journal article" date="2003" name="EMBO J.">
        <title>Domain organization and structure-function relationship of the HET-s prion protein of Podospora anserina.</title>
        <authorList>
            <person name="Balguerie A."/>
            <person name="Dos Reis S."/>
            <person name="Ritter C."/>
            <person name="Chaignepain S."/>
            <person name="Coulary-Salin B."/>
            <person name="Forge V."/>
            <person name="Bathany K."/>
            <person name="Lascu I."/>
            <person name="Schmitter J.M."/>
            <person name="Riek R."/>
            <person name="Saupe S.J."/>
        </authorList>
    </citation>
    <scope>PRION FORMATION</scope>
    <scope>DOMAIN</scope>
</reference>
<reference key="6">
    <citation type="journal article" date="2004" name="J. Cell Sci.">
        <title>The sequences appended to the amyloid core region of the HET-s prion protein determine higher-order aggregate organization in vivo.</title>
        <authorList>
            <person name="Balguerie A."/>
            <person name="Dos Reis S."/>
            <person name="Coulary-Salin B."/>
            <person name="Chaignepain S."/>
            <person name="Sabourin M."/>
            <person name="Schmitter J.M."/>
            <person name="Saupe S.J."/>
        </authorList>
    </citation>
    <scope>PRION FORMATION</scope>
    <scope>DOMAIN</scope>
</reference>
<reference key="7">
    <citation type="journal article" date="2008" name="Science">
        <title>Amyloid fibrils of the HET-s(218-289) prion form a beta solenoid with a triangular hydrophobic core.</title>
        <authorList>
            <person name="Wasmer C."/>
            <person name="Lange A."/>
            <person name="Van Melckebeke H."/>
            <person name="Siemer A.B."/>
            <person name="Riek R."/>
            <person name="Meier B.H."/>
        </authorList>
    </citation>
    <scope>STRUCTURE BY NMR OF 218-289</scope>
</reference>
<reference key="8">
    <citation type="journal article" date="2010" name="J. Am. Chem. Soc.">
        <title>Atomic-resolution three-dimensional structure of HET-s(218-289) amyloid fibrils by solid-state NMR spectroscopy.</title>
        <authorList>
            <person name="Van Melckebeke H."/>
            <person name="Wasmer C."/>
            <person name="Lange A."/>
            <person name="Ab E."/>
            <person name="Loquet A."/>
            <person name="Bockmann A."/>
            <person name="Meier B.H."/>
        </authorList>
    </citation>
    <scope>STRUCTURE BY NMR OF 218-289</scope>
</reference>
<reference key="9">
    <citation type="journal article" date="2010" name="Mol. Cell">
        <title>The mechanism of prion inhibition by HET-S.</title>
        <authorList>
            <person name="Greenwald J."/>
            <person name="Buhtz C."/>
            <person name="Ritter C."/>
            <person name="Kwiatkowski W."/>
            <person name="Choe S."/>
            <person name="Maddelein M.L."/>
            <person name="Ness F."/>
            <person name="Cescau S."/>
            <person name="Soragni A."/>
            <person name="Leitz D."/>
            <person name="Saupe S.J."/>
            <person name="Riek R."/>
        </authorList>
    </citation>
    <scope>X-RAY CRYSTALLOGRAPHY (2.00 ANGSTROMS) OF 13-221</scope>
    <scope>PRION FORMATION</scope>
    <scope>DOMAIN</scope>
</reference>
<reference key="10">
    <citation type="journal article" date="2011" name="Angew. Chem. Int. Ed.">
        <title>The amyloid-Congo red interface at atomic resolution.</title>
        <authorList>
            <person name="Schutz A.K."/>
            <person name="Soragni A."/>
            <person name="Hornemann S."/>
            <person name="Aguzzi A."/>
            <person name="Ernst M."/>
            <person name="Bockmann A."/>
            <person name="Meier B.H."/>
        </authorList>
    </citation>
    <scope>STRUCTURE BY NMR OF 218-289</scope>
</reference>
<proteinExistence type="evidence at protein level"/>
<sequence>MSEPFGIVAGALNVAGLFNNCVDCFEYVQLGRPFGRDYERCQLRLDIAKARLSRWGEAVKINDDPRFHSDAPTDKSVQLAKSIVEEILLLFESAQKTSKRYELVADQQDLVVFEDKDMKPIGRALHRRLNDLVSRRQKQTSLAKKTAWALYDGKSLEKIVDQVARFVDELEKAFPIEAVCHKLAEIEIEEVEDEASLTILKDAAGGIDAAMSDAAAQKIDAIVGRNSAKDIRTEERARVQLGNVVTAAALHGGIRISDQTTNSVETVVGKGESRVLIGNEYGGKGFWDN</sequence>
<dbReference type="EMBL" id="M38529">
    <property type="protein sequence ID" value="AAB94631.1"/>
    <property type="molecule type" value="Genomic_DNA"/>
</dbReference>
<dbReference type="PIR" id="S16556">
    <property type="entry name" value="S16556"/>
</dbReference>
<dbReference type="PIR" id="S16557">
    <property type="entry name" value="S16557"/>
</dbReference>
<dbReference type="PDB" id="2KJ3">
    <property type="method" value="NMR"/>
    <property type="chains" value="A/B/C=218-289"/>
</dbReference>
<dbReference type="PDB" id="2LBU">
    <property type="method" value="NMR"/>
    <property type="chains" value="A/B/C/D/E=218-289"/>
</dbReference>
<dbReference type="PDB" id="2MUS">
    <property type="method" value="NMR"/>
    <property type="chains" value="A/B/C/D/E=218-289"/>
</dbReference>
<dbReference type="PDB" id="2RNM">
    <property type="method" value="NMR"/>
    <property type="chains" value="A/B/C/D/E=218-289"/>
</dbReference>
<dbReference type="PDB" id="2WVN">
    <property type="method" value="X-ray"/>
    <property type="resolution" value="2.62 A"/>
    <property type="chains" value="A=1-227"/>
</dbReference>
<dbReference type="PDB" id="2WVQ">
    <property type="method" value="X-ray"/>
    <property type="resolution" value="2.00 A"/>
    <property type="chains" value="A/B=13-221"/>
</dbReference>
<dbReference type="PDBsum" id="2KJ3"/>
<dbReference type="PDBsum" id="2LBU"/>
<dbReference type="PDBsum" id="2MUS"/>
<dbReference type="PDBsum" id="2RNM"/>
<dbReference type="PDBsum" id="2WVN"/>
<dbReference type="PDBsum" id="2WVQ"/>
<dbReference type="BMRB" id="Q03689"/>
<dbReference type="EMDB" id="EMD-2946"/>
<dbReference type="SMR" id="Q03689"/>
<dbReference type="DIP" id="DIP-58535N"/>
<dbReference type="IntAct" id="Q03689">
    <property type="interactions" value="1"/>
</dbReference>
<dbReference type="TCDB" id="1.C.104.1.1">
    <property type="family name" value="the heterokaryon incompatibility prion/amyloid protein (het-s) family"/>
</dbReference>
<dbReference type="VEuPathDB" id="FungiDB:PODANS_3_620"/>
<dbReference type="EvolutionaryTrace" id="Q03689"/>
<dbReference type="GO" id="GO:0005737">
    <property type="term" value="C:cytoplasm"/>
    <property type="evidence" value="ECO:0007669"/>
    <property type="project" value="UniProtKB-SubCell"/>
</dbReference>
<dbReference type="GO" id="GO:0042802">
    <property type="term" value="F:identical protein binding"/>
    <property type="evidence" value="ECO:0000353"/>
    <property type="project" value="IntAct"/>
</dbReference>
<dbReference type="DisProt" id="DP02317"/>
<dbReference type="FunFam" id="1.20.120.1020:FF:000002">
    <property type="entry name" value="Heterokaryon incompatibility protein s"/>
    <property type="match status" value="1"/>
</dbReference>
<dbReference type="Gene3D" id="1.20.120.1020">
    <property type="entry name" value="Prion-inhibition and propagation, HeLo domain"/>
    <property type="match status" value="1"/>
</dbReference>
<dbReference type="InterPro" id="IPR029498">
    <property type="entry name" value="HeLo_dom"/>
</dbReference>
<dbReference type="InterPro" id="IPR038305">
    <property type="entry name" value="HeLo_sf"/>
</dbReference>
<dbReference type="InterPro" id="IPR021084">
    <property type="entry name" value="Het-s_prion_dom"/>
</dbReference>
<dbReference type="PANTHER" id="PTHR37542">
    <property type="entry name" value="HELO DOMAIN-CONTAINING PROTEIN-RELATED"/>
    <property type="match status" value="1"/>
</dbReference>
<dbReference type="PANTHER" id="PTHR37542:SF3">
    <property type="entry name" value="PRION-INHIBITION AND PROPAGATION HELO DOMAIN-CONTAINING PROTEIN"/>
    <property type="match status" value="1"/>
</dbReference>
<dbReference type="Pfam" id="PF14479">
    <property type="entry name" value="HeLo"/>
    <property type="match status" value="1"/>
</dbReference>
<dbReference type="Pfam" id="PF11558">
    <property type="entry name" value="HET-s_218-289"/>
    <property type="match status" value="1"/>
</dbReference>
<accession>Q03689</accession>
<accession>Q01531</accession>